<reference key="1">
    <citation type="journal article" date="2014" name="Stand. Genomic Sci.">
        <title>Complete genome sequence of Anabaena variabilis ATCC 29413.</title>
        <authorList>
            <person name="Thiel T."/>
            <person name="Pratte B.S."/>
            <person name="Zhong J."/>
            <person name="Goodwin L."/>
            <person name="Copeland A."/>
            <person name="Lucas S."/>
            <person name="Han C."/>
            <person name="Pitluck S."/>
            <person name="Land M.L."/>
            <person name="Kyrpides N.C."/>
            <person name="Woyke T."/>
        </authorList>
    </citation>
    <scope>NUCLEOTIDE SEQUENCE [LARGE SCALE GENOMIC DNA]</scope>
    <source>
        <strain>ATCC 29413 / PCC 7937</strain>
    </source>
</reference>
<accession>Q3MAP6</accession>
<sequence length="115" mass="12316">MTGKGQGFGFGLGKMKELAEAFKKAQQVQEGAKRLQEELEQMEILGEAGGGLVKVIVSGNQEPKRVEISPDALAQGADLLSDLVTAAMKDAYIKSTATMRERMEDLTSGLELPGF</sequence>
<evidence type="ECO:0000255" key="1">
    <source>
        <dbReference type="HAMAP-Rule" id="MF_00274"/>
    </source>
</evidence>
<gene>
    <name type="ordered locus">Ava_2322</name>
</gene>
<dbReference type="EMBL" id="CP000117">
    <property type="protein sequence ID" value="ABA21940.1"/>
    <property type="molecule type" value="Genomic_DNA"/>
</dbReference>
<dbReference type="SMR" id="Q3MAP6"/>
<dbReference type="STRING" id="240292.Ava_2322"/>
<dbReference type="KEGG" id="ava:Ava_2322"/>
<dbReference type="eggNOG" id="COG0718">
    <property type="taxonomic scope" value="Bacteria"/>
</dbReference>
<dbReference type="HOGENOM" id="CLU_140930_0_1_3"/>
<dbReference type="Proteomes" id="UP000002533">
    <property type="component" value="Chromosome"/>
</dbReference>
<dbReference type="GO" id="GO:0043590">
    <property type="term" value="C:bacterial nucleoid"/>
    <property type="evidence" value="ECO:0007669"/>
    <property type="project" value="UniProtKB-UniRule"/>
</dbReference>
<dbReference type="GO" id="GO:0005829">
    <property type="term" value="C:cytosol"/>
    <property type="evidence" value="ECO:0007669"/>
    <property type="project" value="TreeGrafter"/>
</dbReference>
<dbReference type="GO" id="GO:0003677">
    <property type="term" value="F:DNA binding"/>
    <property type="evidence" value="ECO:0007669"/>
    <property type="project" value="UniProtKB-UniRule"/>
</dbReference>
<dbReference type="Gene3D" id="3.30.1310.10">
    <property type="entry name" value="Nucleoid-associated protein YbaB-like domain"/>
    <property type="match status" value="1"/>
</dbReference>
<dbReference type="HAMAP" id="MF_00274">
    <property type="entry name" value="DNA_YbaB_EbfC"/>
    <property type="match status" value="1"/>
</dbReference>
<dbReference type="InterPro" id="IPR036894">
    <property type="entry name" value="YbaB-like_sf"/>
</dbReference>
<dbReference type="InterPro" id="IPR004401">
    <property type="entry name" value="YbaB/EbfC"/>
</dbReference>
<dbReference type="NCBIfam" id="TIGR00103">
    <property type="entry name" value="DNA_YbaB_EbfC"/>
    <property type="match status" value="1"/>
</dbReference>
<dbReference type="PANTHER" id="PTHR33449">
    <property type="entry name" value="NUCLEOID-ASSOCIATED PROTEIN YBAB"/>
    <property type="match status" value="1"/>
</dbReference>
<dbReference type="PANTHER" id="PTHR33449:SF1">
    <property type="entry name" value="NUCLEOID-ASSOCIATED PROTEIN YBAB"/>
    <property type="match status" value="1"/>
</dbReference>
<dbReference type="Pfam" id="PF02575">
    <property type="entry name" value="YbaB_DNA_bd"/>
    <property type="match status" value="1"/>
</dbReference>
<dbReference type="PIRSF" id="PIRSF004555">
    <property type="entry name" value="UCP004555"/>
    <property type="match status" value="1"/>
</dbReference>
<dbReference type="SUPFAM" id="SSF82607">
    <property type="entry name" value="YbaB-like"/>
    <property type="match status" value="1"/>
</dbReference>
<name>Y2322_TRIV2</name>
<feature type="chain" id="PRO_1000003681" description="Nucleoid-associated protein Ava_2322">
    <location>
        <begin position="1"/>
        <end position="115"/>
    </location>
</feature>
<protein>
    <recommendedName>
        <fullName evidence="1">Nucleoid-associated protein Ava_2322</fullName>
    </recommendedName>
</protein>
<comment type="function">
    <text evidence="1">Binds to DNA and alters its conformation. May be involved in regulation of gene expression, nucleoid organization and DNA protection.</text>
</comment>
<comment type="subunit">
    <text evidence="1">Homodimer.</text>
</comment>
<comment type="subcellular location">
    <subcellularLocation>
        <location evidence="1">Cytoplasm</location>
        <location evidence="1">Nucleoid</location>
    </subcellularLocation>
</comment>
<comment type="similarity">
    <text evidence="1">Belongs to the YbaB/EbfC family.</text>
</comment>
<proteinExistence type="inferred from homology"/>
<keyword id="KW-0963">Cytoplasm</keyword>
<keyword id="KW-0238">DNA-binding</keyword>
<organism>
    <name type="scientific">Trichormus variabilis (strain ATCC 29413 / PCC 7937)</name>
    <name type="common">Anabaena variabilis</name>
    <dbReference type="NCBI Taxonomy" id="240292"/>
    <lineage>
        <taxon>Bacteria</taxon>
        <taxon>Bacillati</taxon>
        <taxon>Cyanobacteriota</taxon>
        <taxon>Cyanophyceae</taxon>
        <taxon>Nostocales</taxon>
        <taxon>Nostocaceae</taxon>
        <taxon>Trichormus</taxon>
    </lineage>
</organism>